<protein>
    <recommendedName>
        <fullName evidence="1">Lactate utilization protein A 2</fullName>
    </recommendedName>
</protein>
<dbReference type="EMBL" id="CP000001">
    <property type="protein sequence ID" value="AAU17303.1"/>
    <property type="molecule type" value="Genomic_DNA"/>
</dbReference>
<dbReference type="RefSeq" id="WP_000868794.1">
    <property type="nucleotide sequence ID" value="NC_006274.1"/>
</dbReference>
<dbReference type="SMR" id="Q638X2"/>
<dbReference type="KEGG" id="bcz:BCE33L2958"/>
<dbReference type="PATRIC" id="fig|288681.22.peg.2489"/>
<dbReference type="Proteomes" id="UP000002612">
    <property type="component" value="Chromosome"/>
</dbReference>
<dbReference type="GO" id="GO:0005829">
    <property type="term" value="C:cytosol"/>
    <property type="evidence" value="ECO:0007669"/>
    <property type="project" value="TreeGrafter"/>
</dbReference>
<dbReference type="GO" id="GO:0016491">
    <property type="term" value="F:oxidoreductase activity"/>
    <property type="evidence" value="ECO:0007669"/>
    <property type="project" value="UniProtKB-ARBA"/>
</dbReference>
<dbReference type="GO" id="GO:0006089">
    <property type="term" value="P:lactate metabolic process"/>
    <property type="evidence" value="ECO:0007669"/>
    <property type="project" value="UniProtKB-UniRule"/>
</dbReference>
<dbReference type="HAMAP" id="MF_02105">
    <property type="entry name" value="LutA"/>
    <property type="match status" value="1"/>
</dbReference>
<dbReference type="InterPro" id="IPR004017">
    <property type="entry name" value="Cys_rich_dom"/>
</dbReference>
<dbReference type="InterPro" id="IPR022822">
    <property type="entry name" value="LutA"/>
</dbReference>
<dbReference type="PANTHER" id="PTHR30296:SF0">
    <property type="entry name" value="LACTATE UTILIZATION PROTEIN A"/>
    <property type="match status" value="1"/>
</dbReference>
<dbReference type="PANTHER" id="PTHR30296">
    <property type="entry name" value="UNCHARACTERIZED PROTEIN YKGE"/>
    <property type="match status" value="1"/>
</dbReference>
<dbReference type="Pfam" id="PF02754">
    <property type="entry name" value="CCG"/>
    <property type="match status" value="2"/>
</dbReference>
<name>LUTA2_BACCZ</name>
<proteinExistence type="inferred from homology"/>
<accession>Q638X2</accession>
<reference key="1">
    <citation type="journal article" date="2006" name="J. Bacteriol.">
        <title>Pathogenomic sequence analysis of Bacillus cereus and Bacillus thuringiensis isolates closely related to Bacillus anthracis.</title>
        <authorList>
            <person name="Han C.S."/>
            <person name="Xie G."/>
            <person name="Challacombe J.F."/>
            <person name="Altherr M.R."/>
            <person name="Bhotika S.S."/>
            <person name="Bruce D."/>
            <person name="Campbell C.S."/>
            <person name="Campbell M.L."/>
            <person name="Chen J."/>
            <person name="Chertkov O."/>
            <person name="Cleland C."/>
            <person name="Dimitrijevic M."/>
            <person name="Doggett N.A."/>
            <person name="Fawcett J.J."/>
            <person name="Glavina T."/>
            <person name="Goodwin L.A."/>
            <person name="Hill K.K."/>
            <person name="Hitchcock P."/>
            <person name="Jackson P.J."/>
            <person name="Keim P."/>
            <person name="Kewalramani A.R."/>
            <person name="Longmire J."/>
            <person name="Lucas S."/>
            <person name="Malfatti S."/>
            <person name="McMurry K."/>
            <person name="Meincke L.J."/>
            <person name="Misra M."/>
            <person name="Moseman B.L."/>
            <person name="Mundt M."/>
            <person name="Munk A.C."/>
            <person name="Okinaka R.T."/>
            <person name="Parson-Quintana B."/>
            <person name="Reilly L.P."/>
            <person name="Richardson P."/>
            <person name="Robinson D.L."/>
            <person name="Rubin E."/>
            <person name="Saunders E."/>
            <person name="Tapia R."/>
            <person name="Tesmer J.G."/>
            <person name="Thayer N."/>
            <person name="Thompson L.S."/>
            <person name="Tice H."/>
            <person name="Ticknor L.O."/>
            <person name="Wills P.L."/>
            <person name="Brettin T.S."/>
            <person name="Gilna P."/>
        </authorList>
    </citation>
    <scope>NUCLEOTIDE SEQUENCE [LARGE SCALE GENOMIC DNA]</scope>
    <source>
        <strain>ZK / E33L</strain>
    </source>
</reference>
<feature type="chain" id="PRO_0000384037" description="Lactate utilization protein A 2">
    <location>
        <begin position="1"/>
        <end position="242"/>
    </location>
</feature>
<organism>
    <name type="scientific">Bacillus cereus (strain ZK / E33L)</name>
    <dbReference type="NCBI Taxonomy" id="288681"/>
    <lineage>
        <taxon>Bacteria</taxon>
        <taxon>Bacillati</taxon>
        <taxon>Bacillota</taxon>
        <taxon>Bacilli</taxon>
        <taxon>Bacillales</taxon>
        <taxon>Bacillaceae</taxon>
        <taxon>Bacillus</taxon>
        <taxon>Bacillus cereus group</taxon>
    </lineage>
</organism>
<sequence length="242" mass="27073">MKVSLFITCLSDVFFPQVGRSVVEIMNQCGVELDFPEGQTCCGQPAYNSGYQEDAKLAAKQMIKAFEHSEYIVTPSGSCASMVHHYYKEMFKGDSEWYEKAVHLADRTYELTDFLVNVLGKNDWKSKLVEKAVFHQSCHMSRALGIKEEPLKLLSQVEGLDIKELPYCQDCCGFGGTFAVKMSSISETMVDEKIKHIEATEANLLIGADMGCLMNIGGRLRRKNKNIQVLHVAEVLAKGLNK</sequence>
<comment type="function">
    <text evidence="1">Is involved in L-lactate degradation and allows cells to grow with lactate as the sole carbon source.</text>
</comment>
<comment type="similarity">
    <text evidence="1">Belongs to the LutA/YkgE family.</text>
</comment>
<gene>
    <name evidence="1" type="primary">lutA2</name>
    <name type="ordered locus">BCE33L2958</name>
</gene>
<evidence type="ECO:0000255" key="1">
    <source>
        <dbReference type="HAMAP-Rule" id="MF_02105"/>
    </source>
</evidence>